<organismHost>
    <name type="scientific">Homo sapiens</name>
    <name type="common">Human</name>
    <dbReference type="NCBI Taxonomy" id="9606"/>
</organismHost>
<name>YL12_ADE41</name>
<proteinExistence type="predicted"/>
<dbReference type="EMBL" id="X52532">
    <property type="protein sequence ID" value="CAA36762.1"/>
    <property type="molecule type" value="Genomic_DNA"/>
</dbReference>
<dbReference type="PIR" id="S10209">
    <property type="entry name" value="S10209"/>
</dbReference>
<reference key="1">
    <citation type="journal article" date="1990" name="Nucleic Acids Res.">
        <title>Nucleotide sequence of the region coding for 100K and 33K proteins of human enteric adenovirus type 41 (Tak).</title>
        <authorList>
            <person name="Slemenda S.B."/>
            <person name="Pieniazek N.J."/>
            <person name="Velarde J. Jr."/>
            <person name="Pieniazek D."/>
            <person name="Luftig R.B."/>
        </authorList>
    </citation>
    <scope>NUCLEOTIDE SEQUENCE [GENOMIC DNA]</scope>
    <source>
        <strain>Tak</strain>
    </source>
</reference>
<protein>
    <recommendedName>
        <fullName>Uncharacterized 8.0 kDa protein in 100 kDa protein region</fullName>
    </recommendedName>
</protein>
<feature type="chain" id="PRO_0000221933" description="Uncharacterized 8.0 kDa protein in 100 kDa protein region">
    <location>
        <begin position="1"/>
        <end position="74"/>
    </location>
</feature>
<sequence length="74" mass="8006">MTESIMEGFLNLAQRLGIGKEALQALELNGNQNDRHHHFAPFLQSGGVMAVKPACKIVVRNHGLAILGVLFGLI</sequence>
<organism>
    <name type="scientific">Human adenovirus F serotype 41</name>
    <name type="common">HAdV-41</name>
    <name type="synonym">Human adenovirus 41</name>
    <dbReference type="NCBI Taxonomy" id="10524"/>
    <lineage>
        <taxon>Viruses</taxon>
        <taxon>Varidnaviria</taxon>
        <taxon>Bamfordvirae</taxon>
        <taxon>Preplasmiviricota</taxon>
        <taxon>Tectiliviricetes</taxon>
        <taxon>Rowavirales</taxon>
        <taxon>Adenoviridae</taxon>
        <taxon>Mastadenovirus</taxon>
        <taxon>Human mastadenovirus F</taxon>
    </lineage>
</organism>
<accession>P23689</accession>